<accession>A8F110</accession>
<organism>
    <name type="scientific">Rickettsia massiliae (strain Mtu5)</name>
    <dbReference type="NCBI Taxonomy" id="416276"/>
    <lineage>
        <taxon>Bacteria</taxon>
        <taxon>Pseudomonadati</taxon>
        <taxon>Pseudomonadota</taxon>
        <taxon>Alphaproteobacteria</taxon>
        <taxon>Rickettsiales</taxon>
        <taxon>Rickettsiaceae</taxon>
        <taxon>Rickettsieae</taxon>
        <taxon>Rickettsia</taxon>
        <taxon>spotted fever group</taxon>
    </lineage>
</organism>
<protein>
    <recommendedName>
        <fullName evidence="2">D-alanine--D-alanine ligase</fullName>
        <ecNumber evidence="2">6.3.2.4</ecNumber>
    </recommendedName>
    <alternativeName>
        <fullName evidence="2">D-Ala-D-Ala ligase</fullName>
    </alternativeName>
    <alternativeName>
        <fullName evidence="2">D-alanylalanine synthetase</fullName>
    </alternativeName>
</protein>
<gene>
    <name evidence="2" type="primary">ddl</name>
    <name type="ordered locus">RMA_0341</name>
</gene>
<reference key="1">
    <citation type="journal article" date="2007" name="Genome Res.">
        <title>Lateral gene transfer between obligate intracellular bacteria: evidence from the Rickettsia massiliae genome.</title>
        <authorList>
            <person name="Blanc G."/>
            <person name="Ogata H."/>
            <person name="Robert C."/>
            <person name="Audic S."/>
            <person name="Claverie J.-M."/>
            <person name="Raoult D."/>
        </authorList>
    </citation>
    <scope>NUCLEOTIDE SEQUENCE [LARGE SCALE GENOMIC DNA]</scope>
    <source>
        <strain>Mtu5</strain>
    </source>
</reference>
<comment type="function">
    <text evidence="2">Cell wall formation.</text>
</comment>
<comment type="catalytic activity">
    <reaction evidence="2">
        <text>2 D-alanine + ATP = D-alanyl-D-alanine + ADP + phosphate + H(+)</text>
        <dbReference type="Rhea" id="RHEA:11224"/>
        <dbReference type="ChEBI" id="CHEBI:15378"/>
        <dbReference type="ChEBI" id="CHEBI:30616"/>
        <dbReference type="ChEBI" id="CHEBI:43474"/>
        <dbReference type="ChEBI" id="CHEBI:57416"/>
        <dbReference type="ChEBI" id="CHEBI:57822"/>
        <dbReference type="ChEBI" id="CHEBI:456216"/>
        <dbReference type="EC" id="6.3.2.4"/>
    </reaction>
</comment>
<comment type="cofactor">
    <cofactor evidence="1">
        <name>Mg(2+)</name>
        <dbReference type="ChEBI" id="CHEBI:18420"/>
    </cofactor>
    <cofactor evidence="1">
        <name>Mn(2+)</name>
        <dbReference type="ChEBI" id="CHEBI:29035"/>
    </cofactor>
    <text evidence="1">Binds 2 magnesium or manganese ions per subunit.</text>
</comment>
<comment type="pathway">
    <text evidence="2">Cell wall biogenesis; peptidoglycan biosynthesis.</text>
</comment>
<comment type="subcellular location">
    <subcellularLocation>
        <location evidence="2">Cytoplasm</location>
    </subcellularLocation>
</comment>
<comment type="similarity">
    <text evidence="2">Belongs to the D-alanine--D-alanine ligase family.</text>
</comment>
<sequence>MHKYQTHWVEHSIVKILSSAGKKYIALMAGGMSAEREVSLVSSEGVSKALIELGYSVTFIDMGADITVRLQEIKPDIVFNCLHGTYGEDGCLPGLLNIMRIPYTHSGMLSSALAFNKIHSRSWFLTNNINMAESIVVNKSDNIKNDPMKRPYVIKPLTQGSSIGVEVIFAEDNFNFADYDFPYGDQVIIEQYIKGRELQVAVLNGKALGVLEIKLLKNRFYDYETKYTEGFADHLCPAPLPANLYEKLLIESEKIYKTMNCKGPARAEFILEEQTNKLYALELNTHPGMTPLSIVPEIAAYAGINFTNLIEEIIKTASFES</sequence>
<keyword id="KW-0067">ATP-binding</keyword>
<keyword id="KW-0133">Cell shape</keyword>
<keyword id="KW-0961">Cell wall biogenesis/degradation</keyword>
<keyword id="KW-0963">Cytoplasm</keyword>
<keyword id="KW-0436">Ligase</keyword>
<keyword id="KW-0460">Magnesium</keyword>
<keyword id="KW-0464">Manganese</keyword>
<keyword id="KW-0479">Metal-binding</keyword>
<keyword id="KW-0547">Nucleotide-binding</keyword>
<keyword id="KW-0573">Peptidoglycan synthesis</keyword>
<evidence type="ECO:0000250" key="1"/>
<evidence type="ECO:0000255" key="2">
    <source>
        <dbReference type="HAMAP-Rule" id="MF_00047"/>
    </source>
</evidence>
<proteinExistence type="inferred from homology"/>
<name>DDL_RICM5</name>
<feature type="chain" id="PRO_1000057329" description="D-alanine--D-alanine ligase">
    <location>
        <begin position="1"/>
        <end position="321"/>
    </location>
</feature>
<feature type="domain" description="ATP-grasp" evidence="2">
    <location>
        <begin position="121"/>
        <end position="315"/>
    </location>
</feature>
<feature type="binding site" evidence="2">
    <location>
        <begin position="147"/>
        <end position="199"/>
    </location>
    <ligand>
        <name>ATP</name>
        <dbReference type="ChEBI" id="CHEBI:30616"/>
    </ligand>
</feature>
<feature type="binding site" evidence="2">
    <location>
        <position position="268"/>
    </location>
    <ligand>
        <name>Mg(2+)</name>
        <dbReference type="ChEBI" id="CHEBI:18420"/>
        <label>1</label>
    </ligand>
</feature>
<feature type="binding site" evidence="2">
    <location>
        <position position="282"/>
    </location>
    <ligand>
        <name>Mg(2+)</name>
        <dbReference type="ChEBI" id="CHEBI:18420"/>
        <label>1</label>
    </ligand>
</feature>
<feature type="binding site" evidence="2">
    <location>
        <position position="282"/>
    </location>
    <ligand>
        <name>Mg(2+)</name>
        <dbReference type="ChEBI" id="CHEBI:18420"/>
        <label>2</label>
    </ligand>
</feature>
<feature type="binding site" evidence="2">
    <location>
        <position position="284"/>
    </location>
    <ligand>
        <name>Mg(2+)</name>
        <dbReference type="ChEBI" id="CHEBI:18420"/>
        <label>2</label>
    </ligand>
</feature>
<dbReference type="EC" id="6.3.2.4" evidence="2"/>
<dbReference type="EMBL" id="CP000683">
    <property type="protein sequence ID" value="ABV84596.1"/>
    <property type="molecule type" value="Genomic_DNA"/>
</dbReference>
<dbReference type="RefSeq" id="WP_012152573.1">
    <property type="nucleotide sequence ID" value="NC_009900.1"/>
</dbReference>
<dbReference type="SMR" id="A8F110"/>
<dbReference type="KEGG" id="rms:RMA_0341"/>
<dbReference type="HOGENOM" id="CLU_039268_1_1_5"/>
<dbReference type="UniPathway" id="UPA00219"/>
<dbReference type="Proteomes" id="UP000001311">
    <property type="component" value="Chromosome"/>
</dbReference>
<dbReference type="GO" id="GO:0005737">
    <property type="term" value="C:cytoplasm"/>
    <property type="evidence" value="ECO:0007669"/>
    <property type="project" value="UniProtKB-SubCell"/>
</dbReference>
<dbReference type="GO" id="GO:0005524">
    <property type="term" value="F:ATP binding"/>
    <property type="evidence" value="ECO:0007669"/>
    <property type="project" value="UniProtKB-KW"/>
</dbReference>
<dbReference type="GO" id="GO:0008716">
    <property type="term" value="F:D-alanine-D-alanine ligase activity"/>
    <property type="evidence" value="ECO:0007669"/>
    <property type="project" value="UniProtKB-UniRule"/>
</dbReference>
<dbReference type="GO" id="GO:0046872">
    <property type="term" value="F:metal ion binding"/>
    <property type="evidence" value="ECO:0007669"/>
    <property type="project" value="UniProtKB-KW"/>
</dbReference>
<dbReference type="GO" id="GO:0071555">
    <property type="term" value="P:cell wall organization"/>
    <property type="evidence" value="ECO:0007669"/>
    <property type="project" value="UniProtKB-KW"/>
</dbReference>
<dbReference type="GO" id="GO:0009252">
    <property type="term" value="P:peptidoglycan biosynthetic process"/>
    <property type="evidence" value="ECO:0007669"/>
    <property type="project" value="UniProtKB-UniRule"/>
</dbReference>
<dbReference type="GO" id="GO:0008360">
    <property type="term" value="P:regulation of cell shape"/>
    <property type="evidence" value="ECO:0007669"/>
    <property type="project" value="UniProtKB-KW"/>
</dbReference>
<dbReference type="Gene3D" id="3.40.50.20">
    <property type="match status" value="1"/>
</dbReference>
<dbReference type="Gene3D" id="3.30.1490.20">
    <property type="entry name" value="ATP-grasp fold, A domain"/>
    <property type="match status" value="1"/>
</dbReference>
<dbReference type="Gene3D" id="3.30.470.20">
    <property type="entry name" value="ATP-grasp fold, B domain"/>
    <property type="match status" value="1"/>
</dbReference>
<dbReference type="HAMAP" id="MF_00047">
    <property type="entry name" value="Dala_Dala_lig"/>
    <property type="match status" value="1"/>
</dbReference>
<dbReference type="InterPro" id="IPR011761">
    <property type="entry name" value="ATP-grasp"/>
</dbReference>
<dbReference type="InterPro" id="IPR013815">
    <property type="entry name" value="ATP_grasp_subdomain_1"/>
</dbReference>
<dbReference type="InterPro" id="IPR000291">
    <property type="entry name" value="D-Ala_lig_Van_CS"/>
</dbReference>
<dbReference type="InterPro" id="IPR005905">
    <property type="entry name" value="D_ala_D_ala"/>
</dbReference>
<dbReference type="InterPro" id="IPR011095">
    <property type="entry name" value="Dala_Dala_lig_C"/>
</dbReference>
<dbReference type="InterPro" id="IPR011127">
    <property type="entry name" value="Dala_Dala_lig_N"/>
</dbReference>
<dbReference type="InterPro" id="IPR016185">
    <property type="entry name" value="PreATP-grasp_dom_sf"/>
</dbReference>
<dbReference type="NCBIfam" id="TIGR01205">
    <property type="entry name" value="D_ala_D_alaTIGR"/>
    <property type="match status" value="1"/>
</dbReference>
<dbReference type="NCBIfam" id="NF002378">
    <property type="entry name" value="PRK01372.1"/>
    <property type="match status" value="1"/>
</dbReference>
<dbReference type="PANTHER" id="PTHR23132">
    <property type="entry name" value="D-ALANINE--D-ALANINE LIGASE"/>
    <property type="match status" value="1"/>
</dbReference>
<dbReference type="PANTHER" id="PTHR23132:SF23">
    <property type="entry name" value="D-ALANINE--D-ALANINE LIGASE B"/>
    <property type="match status" value="1"/>
</dbReference>
<dbReference type="Pfam" id="PF07478">
    <property type="entry name" value="Dala_Dala_lig_C"/>
    <property type="match status" value="1"/>
</dbReference>
<dbReference type="Pfam" id="PF01820">
    <property type="entry name" value="Dala_Dala_lig_N"/>
    <property type="match status" value="1"/>
</dbReference>
<dbReference type="PIRSF" id="PIRSF039102">
    <property type="entry name" value="Ddl/VanB"/>
    <property type="match status" value="1"/>
</dbReference>
<dbReference type="SUPFAM" id="SSF56059">
    <property type="entry name" value="Glutathione synthetase ATP-binding domain-like"/>
    <property type="match status" value="1"/>
</dbReference>
<dbReference type="SUPFAM" id="SSF52440">
    <property type="entry name" value="PreATP-grasp domain"/>
    <property type="match status" value="1"/>
</dbReference>
<dbReference type="PROSITE" id="PS50975">
    <property type="entry name" value="ATP_GRASP"/>
    <property type="match status" value="1"/>
</dbReference>
<dbReference type="PROSITE" id="PS00843">
    <property type="entry name" value="DALA_DALA_LIGASE_1"/>
    <property type="match status" value="1"/>
</dbReference>
<dbReference type="PROSITE" id="PS00844">
    <property type="entry name" value="DALA_DALA_LIGASE_2"/>
    <property type="match status" value="1"/>
</dbReference>